<comment type="function">
    <text evidence="1">The UvrABC repair system catalyzes the recognition and processing of DNA lesions. UvrC both incises the 5' and 3' sides of the lesion. The N-terminal half is responsible for the 3' incision and the C-terminal half is responsible for the 5' incision.</text>
</comment>
<comment type="subunit">
    <text evidence="1">Interacts with UvrB in an incision complex.</text>
</comment>
<comment type="subcellular location">
    <subcellularLocation>
        <location evidence="1">Cytoplasm</location>
    </subcellularLocation>
</comment>
<comment type="similarity">
    <text evidence="1">Belongs to the UvrC family.</text>
</comment>
<dbReference type="EMBL" id="CP000518">
    <property type="protein sequence ID" value="ABL91640.1"/>
    <property type="molecule type" value="Genomic_DNA"/>
</dbReference>
<dbReference type="SMR" id="A1UFN2"/>
<dbReference type="STRING" id="189918.Mkms_2442"/>
<dbReference type="KEGG" id="mkm:Mkms_2442"/>
<dbReference type="HOGENOM" id="CLU_014841_1_1_11"/>
<dbReference type="OrthoDB" id="9804933at2"/>
<dbReference type="GO" id="GO:0005737">
    <property type="term" value="C:cytoplasm"/>
    <property type="evidence" value="ECO:0007669"/>
    <property type="project" value="UniProtKB-SubCell"/>
</dbReference>
<dbReference type="GO" id="GO:0009380">
    <property type="term" value="C:excinuclease repair complex"/>
    <property type="evidence" value="ECO:0007669"/>
    <property type="project" value="InterPro"/>
</dbReference>
<dbReference type="GO" id="GO:0003677">
    <property type="term" value="F:DNA binding"/>
    <property type="evidence" value="ECO:0007669"/>
    <property type="project" value="UniProtKB-UniRule"/>
</dbReference>
<dbReference type="GO" id="GO:0009381">
    <property type="term" value="F:excinuclease ABC activity"/>
    <property type="evidence" value="ECO:0007669"/>
    <property type="project" value="UniProtKB-UniRule"/>
</dbReference>
<dbReference type="GO" id="GO:0006289">
    <property type="term" value="P:nucleotide-excision repair"/>
    <property type="evidence" value="ECO:0007669"/>
    <property type="project" value="UniProtKB-UniRule"/>
</dbReference>
<dbReference type="GO" id="GO:0009432">
    <property type="term" value="P:SOS response"/>
    <property type="evidence" value="ECO:0007669"/>
    <property type="project" value="UniProtKB-UniRule"/>
</dbReference>
<dbReference type="CDD" id="cd10434">
    <property type="entry name" value="GIY-YIG_UvrC_Cho"/>
    <property type="match status" value="1"/>
</dbReference>
<dbReference type="FunFam" id="3.30.420.340:FF:000003">
    <property type="entry name" value="UvrABC system protein C"/>
    <property type="match status" value="1"/>
</dbReference>
<dbReference type="FunFam" id="3.40.1440.10:FF:000001">
    <property type="entry name" value="UvrABC system protein C"/>
    <property type="match status" value="1"/>
</dbReference>
<dbReference type="Gene3D" id="1.10.150.20">
    <property type="entry name" value="5' to 3' exonuclease, C-terminal subdomain"/>
    <property type="match status" value="1"/>
</dbReference>
<dbReference type="Gene3D" id="3.40.1440.10">
    <property type="entry name" value="GIY-YIG endonuclease"/>
    <property type="match status" value="1"/>
</dbReference>
<dbReference type="Gene3D" id="4.10.860.10">
    <property type="entry name" value="UVR domain"/>
    <property type="match status" value="1"/>
</dbReference>
<dbReference type="Gene3D" id="3.30.420.340">
    <property type="entry name" value="UvrC, RNAse H endonuclease domain"/>
    <property type="match status" value="1"/>
</dbReference>
<dbReference type="HAMAP" id="MF_00203">
    <property type="entry name" value="UvrC"/>
    <property type="match status" value="1"/>
</dbReference>
<dbReference type="InterPro" id="IPR000305">
    <property type="entry name" value="GIY-YIG_endonuc"/>
</dbReference>
<dbReference type="InterPro" id="IPR035901">
    <property type="entry name" value="GIY-YIG_endonuc_sf"/>
</dbReference>
<dbReference type="InterPro" id="IPR047296">
    <property type="entry name" value="GIY-YIG_UvrC_Cho"/>
</dbReference>
<dbReference type="InterPro" id="IPR003583">
    <property type="entry name" value="Hlx-hairpin-Hlx_DNA-bd_motif"/>
</dbReference>
<dbReference type="InterPro" id="IPR010994">
    <property type="entry name" value="RuvA_2-like"/>
</dbReference>
<dbReference type="InterPro" id="IPR001943">
    <property type="entry name" value="UVR_dom"/>
</dbReference>
<dbReference type="InterPro" id="IPR036876">
    <property type="entry name" value="UVR_dom_sf"/>
</dbReference>
<dbReference type="InterPro" id="IPR050066">
    <property type="entry name" value="UvrABC_protein_C"/>
</dbReference>
<dbReference type="InterPro" id="IPR004791">
    <property type="entry name" value="UvrC"/>
</dbReference>
<dbReference type="InterPro" id="IPR001162">
    <property type="entry name" value="UvrC_RNase_H_dom"/>
</dbReference>
<dbReference type="InterPro" id="IPR038476">
    <property type="entry name" value="UvrC_RNase_H_dom_sf"/>
</dbReference>
<dbReference type="NCBIfam" id="NF001824">
    <property type="entry name" value="PRK00558.1-5"/>
    <property type="match status" value="1"/>
</dbReference>
<dbReference type="NCBIfam" id="TIGR00194">
    <property type="entry name" value="uvrC"/>
    <property type="match status" value="1"/>
</dbReference>
<dbReference type="PANTHER" id="PTHR30562:SF1">
    <property type="entry name" value="UVRABC SYSTEM PROTEIN C"/>
    <property type="match status" value="1"/>
</dbReference>
<dbReference type="PANTHER" id="PTHR30562">
    <property type="entry name" value="UVRC/OXIDOREDUCTASE"/>
    <property type="match status" value="1"/>
</dbReference>
<dbReference type="Pfam" id="PF01541">
    <property type="entry name" value="GIY-YIG"/>
    <property type="match status" value="1"/>
</dbReference>
<dbReference type="Pfam" id="PF14520">
    <property type="entry name" value="HHH_5"/>
    <property type="match status" value="1"/>
</dbReference>
<dbReference type="Pfam" id="PF02151">
    <property type="entry name" value="UVR"/>
    <property type="match status" value="1"/>
</dbReference>
<dbReference type="Pfam" id="PF22920">
    <property type="entry name" value="UvrC_RNaseH"/>
    <property type="match status" value="1"/>
</dbReference>
<dbReference type="Pfam" id="PF08459">
    <property type="entry name" value="UvrC_RNaseH_dom"/>
    <property type="match status" value="1"/>
</dbReference>
<dbReference type="SMART" id="SM00465">
    <property type="entry name" value="GIYc"/>
    <property type="match status" value="1"/>
</dbReference>
<dbReference type="SMART" id="SM00278">
    <property type="entry name" value="HhH1"/>
    <property type="match status" value="2"/>
</dbReference>
<dbReference type="SUPFAM" id="SSF46600">
    <property type="entry name" value="C-terminal UvrC-binding domain of UvrB"/>
    <property type="match status" value="1"/>
</dbReference>
<dbReference type="SUPFAM" id="SSF82771">
    <property type="entry name" value="GIY-YIG endonuclease"/>
    <property type="match status" value="1"/>
</dbReference>
<dbReference type="SUPFAM" id="SSF47781">
    <property type="entry name" value="RuvA domain 2-like"/>
    <property type="match status" value="1"/>
</dbReference>
<dbReference type="PROSITE" id="PS50164">
    <property type="entry name" value="GIY_YIG"/>
    <property type="match status" value="1"/>
</dbReference>
<dbReference type="PROSITE" id="PS50151">
    <property type="entry name" value="UVR"/>
    <property type="match status" value="1"/>
</dbReference>
<dbReference type="PROSITE" id="PS50165">
    <property type="entry name" value="UVRC"/>
    <property type="match status" value="1"/>
</dbReference>
<proteinExistence type="inferred from homology"/>
<accession>A1UFN2</accession>
<keyword id="KW-0963">Cytoplasm</keyword>
<keyword id="KW-0227">DNA damage</keyword>
<keyword id="KW-0228">DNA excision</keyword>
<keyword id="KW-0234">DNA repair</keyword>
<keyword id="KW-0267">Excision nuclease</keyword>
<keyword id="KW-0742">SOS response</keyword>
<evidence type="ECO:0000255" key="1">
    <source>
        <dbReference type="HAMAP-Rule" id="MF_00203"/>
    </source>
</evidence>
<gene>
    <name evidence="1" type="primary">uvrC</name>
    <name type="ordered locus">Mkms_2442</name>
</gene>
<feature type="chain" id="PRO_1000077811" description="UvrABC system protein C">
    <location>
        <begin position="1"/>
        <end position="676"/>
    </location>
</feature>
<feature type="domain" description="GIY-YIG" evidence="1">
    <location>
        <begin position="16"/>
        <end position="95"/>
    </location>
</feature>
<feature type="domain" description="UVR" evidence="1">
    <location>
        <begin position="208"/>
        <end position="243"/>
    </location>
</feature>
<organism>
    <name type="scientific">Mycobacterium sp. (strain KMS)</name>
    <dbReference type="NCBI Taxonomy" id="189918"/>
    <lineage>
        <taxon>Bacteria</taxon>
        <taxon>Bacillati</taxon>
        <taxon>Actinomycetota</taxon>
        <taxon>Actinomycetes</taxon>
        <taxon>Mycobacteriales</taxon>
        <taxon>Mycobacteriaceae</taxon>
        <taxon>Mycobacterium</taxon>
    </lineage>
</organism>
<protein>
    <recommendedName>
        <fullName evidence="1">UvrABC system protein C</fullName>
        <shortName evidence="1">Protein UvrC</shortName>
    </recommendedName>
    <alternativeName>
        <fullName evidence="1">Excinuclease ABC subunit C</fullName>
    </alternativeName>
</protein>
<reference key="1">
    <citation type="submission" date="2006-12" db="EMBL/GenBank/DDBJ databases">
        <title>Complete sequence of chromosome of Mycobacterium sp. KMS.</title>
        <authorList>
            <consortium name="US DOE Joint Genome Institute"/>
            <person name="Copeland A."/>
            <person name="Lucas S."/>
            <person name="Lapidus A."/>
            <person name="Barry K."/>
            <person name="Detter J.C."/>
            <person name="Glavina del Rio T."/>
            <person name="Hammon N."/>
            <person name="Israni S."/>
            <person name="Dalin E."/>
            <person name="Tice H."/>
            <person name="Pitluck S."/>
            <person name="Kiss H."/>
            <person name="Brettin T."/>
            <person name="Bruce D."/>
            <person name="Han C."/>
            <person name="Tapia R."/>
            <person name="Gilna P."/>
            <person name="Schmutz J."/>
            <person name="Larimer F."/>
            <person name="Land M."/>
            <person name="Hauser L."/>
            <person name="Kyrpides N."/>
            <person name="Mikhailova N."/>
            <person name="Miller C.D."/>
            <person name="Richardson P."/>
        </authorList>
    </citation>
    <scope>NUCLEOTIDE SEQUENCE [LARGE SCALE GENOMIC DNA]</scope>
    <source>
        <strain>KMS</strain>
    </source>
</reference>
<name>UVRC_MYCSK</name>
<sequence>MPDPSTYRPAPGSIPVEPGVYRFRDPHGRVIYVGKAKSLRSRLNSYFADLSGLAPRTRQMVMTAAKVEWTVVNTEVEALQLEYNWIKEFDPRFNIRYRDDKSYPVLAVTLNEEFPRLKVYRGPRKKGVRYFGPYSHAWAIRETVDLLTRVFPARTCSAGVFKRHNQIDRPCLLGYIDKCSAPCVGRVSAEQHRQIVLDFCDFLAGKTDRLVRDLERKMTAAAEDLDFERAARLRDDIGALRRALEKQTVVFGDGTDADVVAFADDDLEAAVQVFHVRGGRVRGQRGWIVEKSGEPGESGEGQLVEQFLTQFYGDQAELGSAGDNAGDSGQDEATNPVPRQVLVPCLPDNADELTEWLSQLRGSRVALRVPQRGDKKALFETVQRNAKEALAQHKLKRAGDFTARTAALQSIQDTLGLADAPLRIECIDISHVQGTDVVASLVVFEDGLPRKSDYRHYAIREAAGDGRSDDVASIAEVTRRRFYRHLHDTQHPTELSAEGKSRKFAYPPNLFVVDGGAPQVNAAQAVLDELGISDVAVIGLAKRLEEVWVPSGSDLGPEPIILPRNSEGLYLLQRVRDEAHRFAITYHRSKRSKRMTASALDSVRGLGEHRRKALVTHFGSVARLKEASVEEITAVPGIGVTTARAVLEALGVPQAAPADSDTAAAVIDDDQRRVTG</sequence>